<accession>Q2SNV0</accession>
<gene>
    <name evidence="1" type="primary">rimK1</name>
    <name type="ordered locus">HCH_00778</name>
</gene>
<protein>
    <recommendedName>
        <fullName evidence="1">Probable alpha-L-glutamate ligase 1</fullName>
        <ecNumber evidence="1">6.3.2.-</ecNumber>
    </recommendedName>
</protein>
<proteinExistence type="inferred from homology"/>
<comment type="cofactor">
    <cofactor evidence="1">
        <name>Mg(2+)</name>
        <dbReference type="ChEBI" id="CHEBI:18420"/>
    </cofactor>
    <cofactor evidence="1">
        <name>Mn(2+)</name>
        <dbReference type="ChEBI" id="CHEBI:29035"/>
    </cofactor>
    <text evidence="1">Binds 2 magnesium or manganese ions per subunit.</text>
</comment>
<comment type="similarity">
    <text evidence="1">Belongs to the RimK family.</text>
</comment>
<sequence length="303" mass="32794">MKIAILSRNPSLYSTSRLKEAGEKRGHEVHVIDTLRCYMNMATHKPTIHYQGQVLEGFDAIIPRIGASITFYGTAVLRQFEMMGVFPLNESVAISRARDKLRSLQLLSRKGVGMPVTGFAHSPDDIRDLISMVGGAPLVIKLLEGTQGIGVVLAETRKAAESVIEAFMGLKANILVQEFIKEAGGADIRCFVVGDKVVAAMKRQAQPGEFRSNLHRGGQASVIKITPEERSTAVRAARVMGLNVAGVDLLRSNHGPLVMEVNSSPGLEGIETATGKDIAGLIYSFIEKKSQEKKPSTRTKGQG</sequence>
<dbReference type="EC" id="6.3.2.-" evidence="1"/>
<dbReference type="EMBL" id="CP000155">
    <property type="protein sequence ID" value="ABC27674.1"/>
    <property type="molecule type" value="Genomic_DNA"/>
</dbReference>
<dbReference type="RefSeq" id="WP_011394751.1">
    <property type="nucleotide sequence ID" value="NC_007645.1"/>
</dbReference>
<dbReference type="SMR" id="Q2SNV0"/>
<dbReference type="STRING" id="349521.HCH_00778"/>
<dbReference type="KEGG" id="hch:HCH_00778"/>
<dbReference type="eggNOG" id="COG0189">
    <property type="taxonomic scope" value="Bacteria"/>
</dbReference>
<dbReference type="HOGENOM" id="CLU_054353_0_1_6"/>
<dbReference type="OrthoDB" id="3865600at2"/>
<dbReference type="Proteomes" id="UP000000238">
    <property type="component" value="Chromosome"/>
</dbReference>
<dbReference type="GO" id="GO:0005737">
    <property type="term" value="C:cytoplasm"/>
    <property type="evidence" value="ECO:0007669"/>
    <property type="project" value="TreeGrafter"/>
</dbReference>
<dbReference type="GO" id="GO:0005524">
    <property type="term" value="F:ATP binding"/>
    <property type="evidence" value="ECO:0007669"/>
    <property type="project" value="UniProtKB-UniRule"/>
</dbReference>
<dbReference type="GO" id="GO:0046872">
    <property type="term" value="F:metal ion binding"/>
    <property type="evidence" value="ECO:0007669"/>
    <property type="project" value="UniProtKB-KW"/>
</dbReference>
<dbReference type="GO" id="GO:0018169">
    <property type="term" value="F:ribosomal S6-glutamic acid ligase activity"/>
    <property type="evidence" value="ECO:0007669"/>
    <property type="project" value="TreeGrafter"/>
</dbReference>
<dbReference type="GO" id="GO:0036211">
    <property type="term" value="P:protein modification process"/>
    <property type="evidence" value="ECO:0007669"/>
    <property type="project" value="InterPro"/>
</dbReference>
<dbReference type="GO" id="GO:0009432">
    <property type="term" value="P:SOS response"/>
    <property type="evidence" value="ECO:0007669"/>
    <property type="project" value="TreeGrafter"/>
</dbReference>
<dbReference type="GO" id="GO:0006412">
    <property type="term" value="P:translation"/>
    <property type="evidence" value="ECO:0007669"/>
    <property type="project" value="UniProtKB-KW"/>
</dbReference>
<dbReference type="FunFam" id="3.40.50.20:FF:000004">
    <property type="entry name" value="Probable alpha-L-glutamate ligase"/>
    <property type="match status" value="1"/>
</dbReference>
<dbReference type="FunFam" id="3.30.1490.20:FF:000005">
    <property type="entry name" value="Probable alpha-L-glutamate ligase 1"/>
    <property type="match status" value="1"/>
</dbReference>
<dbReference type="FunFam" id="3.30.470.20:FF:000016">
    <property type="entry name" value="Ribosomal protein S6--L-glutamate ligase"/>
    <property type="match status" value="1"/>
</dbReference>
<dbReference type="Gene3D" id="3.40.50.20">
    <property type="match status" value="1"/>
</dbReference>
<dbReference type="Gene3D" id="3.30.1490.20">
    <property type="entry name" value="ATP-grasp fold, A domain"/>
    <property type="match status" value="1"/>
</dbReference>
<dbReference type="Gene3D" id="3.30.470.20">
    <property type="entry name" value="ATP-grasp fold, B domain"/>
    <property type="match status" value="1"/>
</dbReference>
<dbReference type="HAMAP" id="MF_01552">
    <property type="entry name" value="RimK"/>
    <property type="match status" value="1"/>
</dbReference>
<dbReference type="InterPro" id="IPR011761">
    <property type="entry name" value="ATP-grasp"/>
</dbReference>
<dbReference type="InterPro" id="IPR013651">
    <property type="entry name" value="ATP-grasp_RimK-type"/>
</dbReference>
<dbReference type="InterPro" id="IPR013815">
    <property type="entry name" value="ATP_grasp_subdomain_1"/>
</dbReference>
<dbReference type="InterPro" id="IPR023533">
    <property type="entry name" value="RimK"/>
</dbReference>
<dbReference type="InterPro" id="IPR041107">
    <property type="entry name" value="Rimk_N"/>
</dbReference>
<dbReference type="InterPro" id="IPR004666">
    <property type="entry name" value="Rp_bS6_RimK/Lys_biosynth_LsyX"/>
</dbReference>
<dbReference type="NCBIfam" id="NF007764">
    <property type="entry name" value="PRK10446.1"/>
    <property type="match status" value="1"/>
</dbReference>
<dbReference type="NCBIfam" id="TIGR00768">
    <property type="entry name" value="rimK_fam"/>
    <property type="match status" value="1"/>
</dbReference>
<dbReference type="PANTHER" id="PTHR21621:SF7">
    <property type="entry name" value="RIBOSOMAL PROTEIN BS6--L-GLUTAMATE LIGASE"/>
    <property type="match status" value="1"/>
</dbReference>
<dbReference type="PANTHER" id="PTHR21621">
    <property type="entry name" value="RIBOSOMAL PROTEIN S6 MODIFICATION PROTEIN"/>
    <property type="match status" value="1"/>
</dbReference>
<dbReference type="Pfam" id="PF08443">
    <property type="entry name" value="RimK"/>
    <property type="match status" value="1"/>
</dbReference>
<dbReference type="Pfam" id="PF18030">
    <property type="entry name" value="Rimk_N"/>
    <property type="match status" value="1"/>
</dbReference>
<dbReference type="SUPFAM" id="SSF56059">
    <property type="entry name" value="Glutathione synthetase ATP-binding domain-like"/>
    <property type="match status" value="1"/>
</dbReference>
<dbReference type="PROSITE" id="PS50975">
    <property type="entry name" value="ATP_GRASP"/>
    <property type="match status" value="1"/>
</dbReference>
<organism>
    <name type="scientific">Hahella chejuensis (strain KCTC 2396)</name>
    <dbReference type="NCBI Taxonomy" id="349521"/>
    <lineage>
        <taxon>Bacteria</taxon>
        <taxon>Pseudomonadati</taxon>
        <taxon>Pseudomonadota</taxon>
        <taxon>Gammaproteobacteria</taxon>
        <taxon>Oceanospirillales</taxon>
        <taxon>Hahellaceae</taxon>
        <taxon>Hahella</taxon>
    </lineage>
</organism>
<keyword id="KW-0067">ATP-binding</keyword>
<keyword id="KW-0436">Ligase</keyword>
<keyword id="KW-0460">Magnesium</keyword>
<keyword id="KW-0464">Manganese</keyword>
<keyword id="KW-0479">Metal-binding</keyword>
<keyword id="KW-0547">Nucleotide-binding</keyword>
<keyword id="KW-0648">Protein biosynthesis</keyword>
<keyword id="KW-1185">Reference proteome</keyword>
<name>RIMK1_HAHCH</name>
<evidence type="ECO:0000255" key="1">
    <source>
        <dbReference type="HAMAP-Rule" id="MF_01552"/>
    </source>
</evidence>
<feature type="chain" id="PRO_0000340541" description="Probable alpha-L-glutamate ligase 1">
    <location>
        <begin position="1"/>
        <end position="303"/>
    </location>
</feature>
<feature type="domain" description="ATP-grasp" evidence="1">
    <location>
        <begin position="104"/>
        <end position="287"/>
    </location>
</feature>
<feature type="binding site" evidence="1">
    <location>
        <position position="141"/>
    </location>
    <ligand>
        <name>ATP</name>
        <dbReference type="ChEBI" id="CHEBI:30616"/>
    </ligand>
</feature>
<feature type="binding site" evidence="1">
    <location>
        <begin position="178"/>
        <end position="179"/>
    </location>
    <ligand>
        <name>ATP</name>
        <dbReference type="ChEBI" id="CHEBI:30616"/>
    </ligand>
</feature>
<feature type="binding site" evidence="1">
    <location>
        <position position="187"/>
    </location>
    <ligand>
        <name>ATP</name>
        <dbReference type="ChEBI" id="CHEBI:30616"/>
    </ligand>
</feature>
<feature type="binding site" evidence="1">
    <location>
        <begin position="211"/>
        <end position="213"/>
    </location>
    <ligand>
        <name>ATP</name>
        <dbReference type="ChEBI" id="CHEBI:30616"/>
    </ligand>
</feature>
<feature type="binding site" evidence="1">
    <location>
        <position position="248"/>
    </location>
    <ligand>
        <name>Mg(2+)</name>
        <dbReference type="ChEBI" id="CHEBI:18420"/>
        <label>1</label>
    </ligand>
</feature>
<feature type="binding site" evidence="1">
    <location>
        <position position="248"/>
    </location>
    <ligand>
        <name>Mn(2+)</name>
        <dbReference type="ChEBI" id="CHEBI:29035"/>
        <label>1</label>
    </ligand>
</feature>
<feature type="binding site" evidence="1">
    <location>
        <position position="260"/>
    </location>
    <ligand>
        <name>Mg(2+)</name>
        <dbReference type="ChEBI" id="CHEBI:18420"/>
        <label>1</label>
    </ligand>
</feature>
<feature type="binding site" evidence="1">
    <location>
        <position position="260"/>
    </location>
    <ligand>
        <name>Mg(2+)</name>
        <dbReference type="ChEBI" id="CHEBI:18420"/>
        <label>2</label>
    </ligand>
</feature>
<feature type="binding site" evidence="1">
    <location>
        <position position="260"/>
    </location>
    <ligand>
        <name>Mn(2+)</name>
        <dbReference type="ChEBI" id="CHEBI:29035"/>
        <label>1</label>
    </ligand>
</feature>
<feature type="binding site" evidence="1">
    <location>
        <position position="260"/>
    </location>
    <ligand>
        <name>Mn(2+)</name>
        <dbReference type="ChEBI" id="CHEBI:29035"/>
        <label>2</label>
    </ligand>
</feature>
<feature type="binding site" evidence="1">
    <location>
        <position position="262"/>
    </location>
    <ligand>
        <name>Mg(2+)</name>
        <dbReference type="ChEBI" id="CHEBI:18420"/>
        <label>2</label>
    </ligand>
</feature>
<feature type="binding site" evidence="1">
    <location>
        <position position="262"/>
    </location>
    <ligand>
        <name>Mn(2+)</name>
        <dbReference type="ChEBI" id="CHEBI:29035"/>
        <label>2</label>
    </ligand>
</feature>
<reference key="1">
    <citation type="journal article" date="2005" name="Nucleic Acids Res.">
        <title>Genomic blueprint of Hahella chejuensis, a marine microbe producing an algicidal agent.</title>
        <authorList>
            <person name="Jeong H."/>
            <person name="Yim J.H."/>
            <person name="Lee C."/>
            <person name="Choi S.-H."/>
            <person name="Park Y.K."/>
            <person name="Yoon S.H."/>
            <person name="Hur C.-G."/>
            <person name="Kang H.-Y."/>
            <person name="Kim D."/>
            <person name="Lee H.H."/>
            <person name="Park K.H."/>
            <person name="Park S.-H."/>
            <person name="Park H.-S."/>
            <person name="Lee H.K."/>
            <person name="Oh T.K."/>
            <person name="Kim J.F."/>
        </authorList>
    </citation>
    <scope>NUCLEOTIDE SEQUENCE [LARGE SCALE GENOMIC DNA]</scope>
    <source>
        <strain>KCTC 2396</strain>
    </source>
</reference>